<accession>P44782</accession>
<comment type="function">
    <text evidence="1">Dual specificity enzyme that catalyzes the synthesis of pseudouridine from uracil-746 in 23S ribosomal RNA and from uracil-32 in the anticodon stem and loop of transfer RNAs.</text>
</comment>
<comment type="catalytic activity">
    <reaction evidence="1">
        <text>uridine(32) in tRNA = pseudouridine(32) in tRNA</text>
        <dbReference type="Rhea" id="RHEA:42544"/>
        <dbReference type="Rhea" id="RHEA-COMP:10107"/>
        <dbReference type="Rhea" id="RHEA-COMP:10108"/>
        <dbReference type="ChEBI" id="CHEBI:65314"/>
        <dbReference type="ChEBI" id="CHEBI:65315"/>
        <dbReference type="EC" id="5.4.99.28"/>
    </reaction>
</comment>
<comment type="catalytic activity">
    <reaction evidence="1">
        <text>uridine(746) in 23S rRNA = pseudouridine(746) in 23S rRNA</text>
        <dbReference type="Rhea" id="RHEA:42548"/>
        <dbReference type="Rhea" id="RHEA-COMP:10109"/>
        <dbReference type="Rhea" id="RHEA-COMP:10110"/>
        <dbReference type="ChEBI" id="CHEBI:65314"/>
        <dbReference type="ChEBI" id="CHEBI:65315"/>
        <dbReference type="EC" id="5.4.99.29"/>
    </reaction>
</comment>
<comment type="similarity">
    <text evidence="2">Belongs to the pseudouridine synthase RluA family.</text>
</comment>
<organism>
    <name type="scientific">Haemophilus influenzae (strain ATCC 51907 / DSM 11121 / KW20 / Rd)</name>
    <dbReference type="NCBI Taxonomy" id="71421"/>
    <lineage>
        <taxon>Bacteria</taxon>
        <taxon>Pseudomonadati</taxon>
        <taxon>Pseudomonadota</taxon>
        <taxon>Gammaproteobacteria</taxon>
        <taxon>Pasteurellales</taxon>
        <taxon>Pasteurellaceae</taxon>
        <taxon>Haemophilus</taxon>
    </lineage>
</organism>
<feature type="chain" id="PRO_0000162655" description="Dual-specificity RNA pseudouridine synthase RluA">
    <location>
        <begin position="1"/>
        <end position="219"/>
    </location>
</feature>
<feature type="active site" evidence="1">
    <location>
        <position position="64"/>
    </location>
</feature>
<reference key="1">
    <citation type="journal article" date="1995" name="Science">
        <title>Whole-genome random sequencing and assembly of Haemophilus influenzae Rd.</title>
        <authorList>
            <person name="Fleischmann R.D."/>
            <person name="Adams M.D."/>
            <person name="White O."/>
            <person name="Clayton R.A."/>
            <person name="Kirkness E.F."/>
            <person name="Kerlavage A.R."/>
            <person name="Bult C.J."/>
            <person name="Tomb J.-F."/>
            <person name="Dougherty B.A."/>
            <person name="Merrick J.M."/>
            <person name="McKenney K."/>
            <person name="Sutton G.G."/>
            <person name="FitzHugh W."/>
            <person name="Fields C.A."/>
            <person name="Gocayne J.D."/>
            <person name="Scott J.D."/>
            <person name="Shirley R."/>
            <person name="Liu L.-I."/>
            <person name="Glodek A."/>
            <person name="Kelley J.M."/>
            <person name="Weidman J.F."/>
            <person name="Phillips C.A."/>
            <person name="Spriggs T."/>
            <person name="Hedblom E."/>
            <person name="Cotton M.D."/>
            <person name="Utterback T.R."/>
            <person name="Hanna M.C."/>
            <person name="Nguyen D.T."/>
            <person name="Saudek D.M."/>
            <person name="Brandon R.C."/>
            <person name="Fine L.D."/>
            <person name="Fritchman J.L."/>
            <person name="Fuhrmann J.L."/>
            <person name="Geoghagen N.S.M."/>
            <person name="Gnehm C.L."/>
            <person name="McDonald L.A."/>
            <person name="Small K.V."/>
            <person name="Fraser C.M."/>
            <person name="Smith H.O."/>
            <person name="Venter J.C."/>
        </authorList>
    </citation>
    <scope>NUCLEOTIDE SEQUENCE [LARGE SCALE GENOMIC DNA]</scope>
    <source>
        <strain>ATCC 51907 / DSM 11121 / KW20 / Rd</strain>
    </source>
</reference>
<keyword id="KW-0413">Isomerase</keyword>
<keyword id="KW-1185">Reference proteome</keyword>
<keyword id="KW-0698">rRNA processing</keyword>
<keyword id="KW-0819">tRNA processing</keyword>
<evidence type="ECO:0000250" key="1">
    <source>
        <dbReference type="UniProtKB" id="P0AA37"/>
    </source>
</evidence>
<evidence type="ECO:0000305" key="2"/>
<dbReference type="EC" id="5.4.99.28" evidence="1"/>
<dbReference type="EC" id="5.4.99.29" evidence="1"/>
<dbReference type="EMBL" id="L42023">
    <property type="protein sequence ID" value="AAC22276.1"/>
    <property type="molecule type" value="Genomic_DNA"/>
</dbReference>
<dbReference type="PIR" id="E64155">
    <property type="entry name" value="E64155"/>
</dbReference>
<dbReference type="RefSeq" id="NP_438775.1">
    <property type="nucleotide sequence ID" value="NC_000907.1"/>
</dbReference>
<dbReference type="SMR" id="P44782"/>
<dbReference type="STRING" id="71421.HI_0617"/>
<dbReference type="EnsemblBacteria" id="AAC22276">
    <property type="protein sequence ID" value="AAC22276"/>
    <property type="gene ID" value="HI_0617"/>
</dbReference>
<dbReference type="KEGG" id="hin:HI_0617"/>
<dbReference type="PATRIC" id="fig|71421.8.peg.641"/>
<dbReference type="eggNOG" id="COG0564">
    <property type="taxonomic scope" value="Bacteria"/>
</dbReference>
<dbReference type="HOGENOM" id="CLU_016902_11_1_6"/>
<dbReference type="OrthoDB" id="9807829at2"/>
<dbReference type="PhylomeDB" id="P44782"/>
<dbReference type="BioCyc" id="HINF71421:G1GJ1-638-MONOMER"/>
<dbReference type="Proteomes" id="UP000000579">
    <property type="component" value="Chromosome"/>
</dbReference>
<dbReference type="GO" id="GO:0160142">
    <property type="term" value="F:23S rRNA pseudouridine(746) synthase activity"/>
    <property type="evidence" value="ECO:0007669"/>
    <property type="project" value="UniProtKB-EC"/>
</dbReference>
<dbReference type="GO" id="GO:0009982">
    <property type="term" value="F:pseudouridine synthase activity"/>
    <property type="evidence" value="ECO:0000318"/>
    <property type="project" value="GO_Central"/>
</dbReference>
<dbReference type="GO" id="GO:0003723">
    <property type="term" value="F:RNA binding"/>
    <property type="evidence" value="ECO:0007669"/>
    <property type="project" value="InterPro"/>
</dbReference>
<dbReference type="GO" id="GO:0160151">
    <property type="term" value="F:tRNA pseudouridine(32) synthase activity"/>
    <property type="evidence" value="ECO:0007669"/>
    <property type="project" value="UniProtKB-EC"/>
</dbReference>
<dbReference type="GO" id="GO:0000455">
    <property type="term" value="P:enzyme-directed rRNA pseudouridine synthesis"/>
    <property type="evidence" value="ECO:0000318"/>
    <property type="project" value="GO_Central"/>
</dbReference>
<dbReference type="GO" id="GO:0008033">
    <property type="term" value="P:tRNA processing"/>
    <property type="evidence" value="ECO:0007669"/>
    <property type="project" value="UniProtKB-KW"/>
</dbReference>
<dbReference type="CDD" id="cd02869">
    <property type="entry name" value="PseudoU_synth_RluA_like"/>
    <property type="match status" value="1"/>
</dbReference>
<dbReference type="FunFam" id="3.30.2350.10:FF:000005">
    <property type="entry name" value="Pseudouridine synthase"/>
    <property type="match status" value="1"/>
</dbReference>
<dbReference type="Gene3D" id="3.30.2350.10">
    <property type="entry name" value="Pseudouridine synthase"/>
    <property type="match status" value="1"/>
</dbReference>
<dbReference type="InterPro" id="IPR020103">
    <property type="entry name" value="PsdUridine_synth_cat_dom_sf"/>
</dbReference>
<dbReference type="InterPro" id="IPR006224">
    <property type="entry name" value="PsdUridine_synth_RluA-like_CS"/>
</dbReference>
<dbReference type="InterPro" id="IPR006145">
    <property type="entry name" value="PsdUridine_synth_RsuA/RluA"/>
</dbReference>
<dbReference type="InterPro" id="IPR050188">
    <property type="entry name" value="RluA_PseudoU_synthase"/>
</dbReference>
<dbReference type="NCBIfam" id="NF007543">
    <property type="entry name" value="PRK10158.1"/>
    <property type="match status" value="1"/>
</dbReference>
<dbReference type="PANTHER" id="PTHR21600:SF91">
    <property type="entry name" value="DUAL-SPECIFICITY RNA PSEUDOURIDINE SYNTHASE RLUA"/>
    <property type="match status" value="1"/>
</dbReference>
<dbReference type="PANTHER" id="PTHR21600">
    <property type="entry name" value="MITOCHONDRIAL RNA PSEUDOURIDINE SYNTHASE"/>
    <property type="match status" value="1"/>
</dbReference>
<dbReference type="Pfam" id="PF00849">
    <property type="entry name" value="PseudoU_synth_2"/>
    <property type="match status" value="1"/>
</dbReference>
<dbReference type="SUPFAM" id="SSF55120">
    <property type="entry name" value="Pseudouridine synthase"/>
    <property type="match status" value="1"/>
</dbReference>
<dbReference type="PROSITE" id="PS01129">
    <property type="entry name" value="PSI_RLU"/>
    <property type="match status" value="1"/>
</dbReference>
<sequence length="219" mass="25138">MALIEYNPPLEPYLDIIYQDNHLCVVNKPSGLLSVPGNQPQYYDSAMSRVKEKFGFCEPAHRLDMATSGIIVFALSKAADRELKRQFREREPKKHYQAIVWGHLENDYGEVNLPMICDWENRPRQRLDFVLGKRAVTKFEVLARLPNNSTRVKLTPVTGRSHQLRLHMLALGHPILGDKFYSHPQAKVMSPRLCLHAEELTITHPITGETMTFNAKSDF</sequence>
<protein>
    <recommendedName>
        <fullName evidence="1">Dual-specificity RNA pseudouridine synthase RluA</fullName>
        <ecNumber evidence="1">5.4.99.28</ecNumber>
        <ecNumber evidence="1">5.4.99.29</ecNumber>
    </recommendedName>
    <alternativeName>
        <fullName evidence="1">23S rRNA pseudouridine(746) synthase</fullName>
    </alternativeName>
    <alternativeName>
        <fullName evidence="1">Ribosomal large subunit pseudouridine synthase A</fullName>
    </alternativeName>
    <alternativeName>
        <fullName evidence="1">rRNA pseudouridylate synthase A</fullName>
    </alternativeName>
    <alternativeName>
        <fullName evidence="1">rRNA-uridine isomerase A</fullName>
    </alternativeName>
    <alternativeName>
        <fullName evidence="1">tRNA pseudouridine(32) synthase</fullName>
    </alternativeName>
</protein>
<proteinExistence type="inferred from homology"/>
<gene>
    <name type="primary">rluA</name>
    <name type="ordered locus">HI_0617</name>
</gene>
<name>RLUA_HAEIN</name>